<protein>
    <recommendedName>
        <fullName evidence="1">Proteasome subunit alpha</fullName>
    </recommendedName>
    <alternativeName>
        <fullName evidence="1">20S proteasome alpha subunit</fullName>
    </alternativeName>
    <alternativeName>
        <fullName evidence="1">Proteasome core protein PrcA</fullName>
    </alternativeName>
</protein>
<dbReference type="EMBL" id="CU458896">
    <property type="protein sequence ID" value="CAM62254.1"/>
    <property type="molecule type" value="Genomic_DNA"/>
</dbReference>
<dbReference type="RefSeq" id="WP_005075070.1">
    <property type="nucleotide sequence ID" value="NZ_MLCG01000002.1"/>
</dbReference>
<dbReference type="SMR" id="B1MAI3"/>
<dbReference type="MEROPS" id="T01.980"/>
<dbReference type="GeneID" id="93379109"/>
<dbReference type="KEGG" id="mab:MAB_2173"/>
<dbReference type="UniPathway" id="UPA00997"/>
<dbReference type="Proteomes" id="UP000007137">
    <property type="component" value="Chromosome"/>
</dbReference>
<dbReference type="GO" id="GO:0005737">
    <property type="term" value="C:cytoplasm"/>
    <property type="evidence" value="ECO:0007669"/>
    <property type="project" value="UniProtKB-SubCell"/>
</dbReference>
<dbReference type="GO" id="GO:0019773">
    <property type="term" value="C:proteasome core complex, alpha-subunit complex"/>
    <property type="evidence" value="ECO:0007669"/>
    <property type="project" value="UniProtKB-UniRule"/>
</dbReference>
<dbReference type="GO" id="GO:0004298">
    <property type="term" value="F:threonine-type endopeptidase activity"/>
    <property type="evidence" value="ECO:0007669"/>
    <property type="project" value="InterPro"/>
</dbReference>
<dbReference type="GO" id="GO:0019941">
    <property type="term" value="P:modification-dependent protein catabolic process"/>
    <property type="evidence" value="ECO:0007669"/>
    <property type="project" value="UniProtKB-UniRule"/>
</dbReference>
<dbReference type="GO" id="GO:0010498">
    <property type="term" value="P:proteasomal protein catabolic process"/>
    <property type="evidence" value="ECO:0007669"/>
    <property type="project" value="UniProtKB-UniRule"/>
</dbReference>
<dbReference type="CDD" id="cd01906">
    <property type="entry name" value="proteasome_protease_HslV"/>
    <property type="match status" value="1"/>
</dbReference>
<dbReference type="Gene3D" id="3.60.20.10">
    <property type="entry name" value="Glutamine Phosphoribosylpyrophosphate, subunit 1, domain 1"/>
    <property type="match status" value="1"/>
</dbReference>
<dbReference type="HAMAP" id="MF_00289_B">
    <property type="entry name" value="Proteasome_A_B"/>
    <property type="match status" value="1"/>
</dbReference>
<dbReference type="InterPro" id="IPR029055">
    <property type="entry name" value="Ntn_hydrolases_N"/>
</dbReference>
<dbReference type="InterPro" id="IPR023332">
    <property type="entry name" value="Proteasome_alpha-type"/>
</dbReference>
<dbReference type="InterPro" id="IPR022296">
    <property type="entry name" value="Proteasome_asu_bac"/>
</dbReference>
<dbReference type="InterPro" id="IPR001353">
    <property type="entry name" value="Proteasome_sua/b"/>
</dbReference>
<dbReference type="NCBIfam" id="TIGR03691">
    <property type="entry name" value="20S_bact_alpha"/>
    <property type="match status" value="1"/>
</dbReference>
<dbReference type="Pfam" id="PF00227">
    <property type="entry name" value="Proteasome"/>
    <property type="match status" value="1"/>
</dbReference>
<dbReference type="SUPFAM" id="SSF56235">
    <property type="entry name" value="N-terminal nucleophile aminohydrolases (Ntn hydrolases)"/>
    <property type="match status" value="1"/>
</dbReference>
<dbReference type="PROSITE" id="PS51475">
    <property type="entry name" value="PROTEASOME_ALPHA_2"/>
    <property type="match status" value="1"/>
</dbReference>
<keyword id="KW-0963">Cytoplasm</keyword>
<keyword id="KW-0647">Proteasome</keyword>
<keyword id="KW-1185">Reference proteome</keyword>
<comment type="function">
    <text evidence="1">Component of the proteasome core, a large protease complex with broad specificity involved in protein degradation.</text>
</comment>
<comment type="activity regulation">
    <text evidence="1">The formation of the proteasomal ATPase ARC-20S proteasome complex, likely via the docking of the C-termini of ARC into the intersubunit pockets in the alpha-rings, may trigger opening of the gate for substrate entry. Interconversion between the open-gate and close-gate conformations leads to a dynamic regulation of the 20S proteasome proteolysis activity.</text>
</comment>
<comment type="pathway">
    <text evidence="1">Protein degradation; proteasomal Pup-dependent pathway.</text>
</comment>
<comment type="subunit">
    <text evidence="1">The 20S proteasome core is composed of 14 alpha and 14 beta subunits that assemble into four stacked heptameric rings, resulting in a barrel-shaped structure. The two inner rings, each composed of seven catalytic beta subunits, are sandwiched by two outer rings, each composed of seven alpha subunits. The catalytic chamber with the active sites is on the inside of the barrel. Has a gated structure, the ends of the cylinder being occluded by the N-termini of the alpha-subunits. Is capped by the proteasome-associated ATPase, ARC.</text>
</comment>
<comment type="subcellular location">
    <subcellularLocation>
        <location evidence="1">Cytoplasm</location>
    </subcellularLocation>
</comment>
<comment type="similarity">
    <text evidence="1">Belongs to the peptidase T1A family.</text>
</comment>
<name>PSA_MYCA9</name>
<accession>B1MAI3</accession>
<feature type="chain" id="PRO_0000397145" description="Proteasome subunit alpha">
    <location>
        <begin position="1"/>
        <end position="260"/>
    </location>
</feature>
<feature type="region of interest" description="Disordered" evidence="2">
    <location>
        <begin position="231"/>
        <end position="260"/>
    </location>
</feature>
<reference key="1">
    <citation type="journal article" date="2009" name="PLoS ONE">
        <title>Non mycobacterial virulence genes in the genome of the emerging pathogen Mycobacterium abscessus.</title>
        <authorList>
            <person name="Ripoll F."/>
            <person name="Pasek S."/>
            <person name="Schenowitz C."/>
            <person name="Dossat C."/>
            <person name="Barbe V."/>
            <person name="Rottman M."/>
            <person name="Macheras E."/>
            <person name="Heym B."/>
            <person name="Herrmann J.L."/>
            <person name="Daffe M."/>
            <person name="Brosch R."/>
            <person name="Risler J.L."/>
            <person name="Gaillard J.L."/>
        </authorList>
    </citation>
    <scope>NUCLEOTIDE SEQUENCE [LARGE SCALE GENOMIC DNA]</scope>
    <source>
        <strain>ATCC 19977 / DSM 44196 / CCUG 20993 / CIP 104536 / JCM 13569 / NCTC 13031 / TMC 1543 / L948</strain>
    </source>
</reference>
<sequence>MTFPYYASVEQLMRDRSELARKGISRGRSVVALTYTDGVLFVAENPSNSLQKVSEVYDRVGFAAVGKFNEFDRLRRGGIQWADMRGYAYDRRDVSGRQLANIYAEALGTIFNEQAKPYEVELCVGEVAHYGRDTEPVLYRITYDGSIADEPHWVVMGGNTEPVINSLKESYVEDSALKDAVGFAVKALQAGTAGANGSEGRALGGLEVAVLEQSRPRRAFRRIKGAALEALLPEDFSPGQTEGGGDPAPESGDSKDAKDN</sequence>
<proteinExistence type="inferred from homology"/>
<organism>
    <name type="scientific">Mycobacteroides abscessus (strain ATCC 19977 / DSM 44196 / CCUG 20993 / CIP 104536 / JCM 13569 / NCTC 13031 / TMC 1543 / L948)</name>
    <name type="common">Mycobacterium abscessus</name>
    <dbReference type="NCBI Taxonomy" id="561007"/>
    <lineage>
        <taxon>Bacteria</taxon>
        <taxon>Bacillati</taxon>
        <taxon>Actinomycetota</taxon>
        <taxon>Actinomycetes</taxon>
        <taxon>Mycobacteriales</taxon>
        <taxon>Mycobacteriaceae</taxon>
        <taxon>Mycobacteroides</taxon>
        <taxon>Mycobacteroides abscessus</taxon>
    </lineage>
</organism>
<gene>
    <name evidence="1" type="primary">prcA</name>
    <name type="ordered locus">MAB_2173</name>
</gene>
<evidence type="ECO:0000255" key="1">
    <source>
        <dbReference type="HAMAP-Rule" id="MF_00289"/>
    </source>
</evidence>
<evidence type="ECO:0000256" key="2">
    <source>
        <dbReference type="SAM" id="MobiDB-lite"/>
    </source>
</evidence>